<organism>
    <name type="scientific">Neosartorya fischeri (strain ATCC 1020 / DSM 3700 / CBS 544.65 / FGSC A1164 / JCM 1740 / NRRL 181 / WB 181)</name>
    <name type="common">Aspergillus fischerianus</name>
    <dbReference type="NCBI Taxonomy" id="331117"/>
    <lineage>
        <taxon>Eukaryota</taxon>
        <taxon>Fungi</taxon>
        <taxon>Dikarya</taxon>
        <taxon>Ascomycota</taxon>
        <taxon>Pezizomycotina</taxon>
        <taxon>Eurotiomycetes</taxon>
        <taxon>Eurotiomycetidae</taxon>
        <taxon>Eurotiales</taxon>
        <taxon>Aspergillaceae</taxon>
        <taxon>Aspergillus</taxon>
        <taxon>Aspergillus subgen. Fumigati</taxon>
    </lineage>
</organism>
<keyword id="KW-0227">DNA damage</keyword>
<keyword id="KW-0234">DNA repair</keyword>
<keyword id="KW-0235">DNA replication</keyword>
<keyword id="KW-0255">Endonuclease</keyword>
<keyword id="KW-0269">Exonuclease</keyword>
<keyword id="KW-0378">Hydrolase</keyword>
<keyword id="KW-0460">Magnesium</keyword>
<keyword id="KW-0479">Metal-binding</keyword>
<keyword id="KW-0496">Mitochondrion</keyword>
<keyword id="KW-0540">Nuclease</keyword>
<keyword id="KW-0539">Nucleus</keyword>
<keyword id="KW-0597">Phosphoprotein</keyword>
<keyword id="KW-1185">Reference proteome</keyword>
<accession>A1D8A4</accession>
<dbReference type="EC" id="3.1.-.-" evidence="1"/>
<dbReference type="EMBL" id="DS027690">
    <property type="protein sequence ID" value="EAW21948.1"/>
    <property type="molecule type" value="Genomic_DNA"/>
</dbReference>
<dbReference type="RefSeq" id="XP_001263845.1">
    <property type="nucleotide sequence ID" value="XM_001263844.1"/>
</dbReference>
<dbReference type="SMR" id="A1D8A4"/>
<dbReference type="STRING" id="331117.A1D8A4"/>
<dbReference type="EnsemblFungi" id="EAW21948">
    <property type="protein sequence ID" value="EAW21948"/>
    <property type="gene ID" value="NFIA_071190"/>
</dbReference>
<dbReference type="GeneID" id="4590491"/>
<dbReference type="KEGG" id="nfi:NFIA_071190"/>
<dbReference type="VEuPathDB" id="FungiDB:NFIA_071190"/>
<dbReference type="eggNOG" id="KOG2519">
    <property type="taxonomic scope" value="Eukaryota"/>
</dbReference>
<dbReference type="HOGENOM" id="CLU_032444_1_1_1"/>
<dbReference type="OMA" id="IQEVHID"/>
<dbReference type="OrthoDB" id="1937206at2759"/>
<dbReference type="Proteomes" id="UP000006702">
    <property type="component" value="Unassembled WGS sequence"/>
</dbReference>
<dbReference type="GO" id="GO:0005739">
    <property type="term" value="C:mitochondrion"/>
    <property type="evidence" value="ECO:0007669"/>
    <property type="project" value="UniProtKB-SubCell"/>
</dbReference>
<dbReference type="GO" id="GO:0005730">
    <property type="term" value="C:nucleolus"/>
    <property type="evidence" value="ECO:0007669"/>
    <property type="project" value="UniProtKB-SubCell"/>
</dbReference>
<dbReference type="GO" id="GO:0005654">
    <property type="term" value="C:nucleoplasm"/>
    <property type="evidence" value="ECO:0007669"/>
    <property type="project" value="UniProtKB-SubCell"/>
</dbReference>
<dbReference type="GO" id="GO:0008409">
    <property type="term" value="F:5'-3' exonuclease activity"/>
    <property type="evidence" value="ECO:0007669"/>
    <property type="project" value="UniProtKB-UniRule"/>
</dbReference>
<dbReference type="GO" id="GO:0017108">
    <property type="term" value="F:5'-flap endonuclease activity"/>
    <property type="evidence" value="ECO:0007669"/>
    <property type="project" value="UniProtKB-UniRule"/>
</dbReference>
<dbReference type="GO" id="GO:0003677">
    <property type="term" value="F:DNA binding"/>
    <property type="evidence" value="ECO:0007669"/>
    <property type="project" value="UniProtKB-UniRule"/>
</dbReference>
<dbReference type="GO" id="GO:0000287">
    <property type="term" value="F:magnesium ion binding"/>
    <property type="evidence" value="ECO:0007669"/>
    <property type="project" value="UniProtKB-UniRule"/>
</dbReference>
<dbReference type="GO" id="GO:0006284">
    <property type="term" value="P:base-excision repair"/>
    <property type="evidence" value="ECO:0007669"/>
    <property type="project" value="UniProtKB-UniRule"/>
</dbReference>
<dbReference type="GO" id="GO:0043137">
    <property type="term" value="P:DNA replication, removal of RNA primer"/>
    <property type="evidence" value="ECO:0007669"/>
    <property type="project" value="UniProtKB-UniRule"/>
</dbReference>
<dbReference type="CDD" id="cd09907">
    <property type="entry name" value="H3TH_FEN1-Euk"/>
    <property type="match status" value="1"/>
</dbReference>
<dbReference type="CDD" id="cd09867">
    <property type="entry name" value="PIN_FEN1"/>
    <property type="match status" value="1"/>
</dbReference>
<dbReference type="FunFam" id="1.10.150.20:FF:000009">
    <property type="entry name" value="Flap endonuclease 1"/>
    <property type="match status" value="1"/>
</dbReference>
<dbReference type="FunFam" id="3.40.50.1010:FF:000003">
    <property type="entry name" value="Flap endonuclease 1"/>
    <property type="match status" value="1"/>
</dbReference>
<dbReference type="Gene3D" id="1.10.150.20">
    <property type="entry name" value="5' to 3' exonuclease, C-terminal subdomain"/>
    <property type="match status" value="1"/>
</dbReference>
<dbReference type="Gene3D" id="3.40.50.1010">
    <property type="entry name" value="5'-nuclease"/>
    <property type="match status" value="1"/>
</dbReference>
<dbReference type="HAMAP" id="MF_00614">
    <property type="entry name" value="Fen"/>
    <property type="match status" value="1"/>
</dbReference>
<dbReference type="InterPro" id="IPR036279">
    <property type="entry name" value="5-3_exonuclease_C_sf"/>
</dbReference>
<dbReference type="InterPro" id="IPR023426">
    <property type="entry name" value="Flap_endonuc"/>
</dbReference>
<dbReference type="InterPro" id="IPR008918">
    <property type="entry name" value="HhH2"/>
</dbReference>
<dbReference type="InterPro" id="IPR029060">
    <property type="entry name" value="PIN-like_dom_sf"/>
</dbReference>
<dbReference type="InterPro" id="IPR006086">
    <property type="entry name" value="XPG-I_dom"/>
</dbReference>
<dbReference type="InterPro" id="IPR006084">
    <property type="entry name" value="XPG/Rad2"/>
</dbReference>
<dbReference type="InterPro" id="IPR019974">
    <property type="entry name" value="XPG_CS"/>
</dbReference>
<dbReference type="InterPro" id="IPR006085">
    <property type="entry name" value="XPG_DNA_repair_N"/>
</dbReference>
<dbReference type="PANTHER" id="PTHR11081:SF9">
    <property type="entry name" value="FLAP ENDONUCLEASE 1"/>
    <property type="match status" value="1"/>
</dbReference>
<dbReference type="PANTHER" id="PTHR11081">
    <property type="entry name" value="FLAP ENDONUCLEASE FAMILY MEMBER"/>
    <property type="match status" value="1"/>
</dbReference>
<dbReference type="Pfam" id="PF00867">
    <property type="entry name" value="XPG_I"/>
    <property type="match status" value="1"/>
</dbReference>
<dbReference type="Pfam" id="PF00752">
    <property type="entry name" value="XPG_N"/>
    <property type="match status" value="1"/>
</dbReference>
<dbReference type="PRINTS" id="PR00853">
    <property type="entry name" value="XPGRADSUPER"/>
</dbReference>
<dbReference type="SMART" id="SM00279">
    <property type="entry name" value="HhH2"/>
    <property type="match status" value="1"/>
</dbReference>
<dbReference type="SMART" id="SM00484">
    <property type="entry name" value="XPGI"/>
    <property type="match status" value="1"/>
</dbReference>
<dbReference type="SMART" id="SM00485">
    <property type="entry name" value="XPGN"/>
    <property type="match status" value="1"/>
</dbReference>
<dbReference type="SUPFAM" id="SSF47807">
    <property type="entry name" value="5' to 3' exonuclease, C-terminal subdomain"/>
    <property type="match status" value="1"/>
</dbReference>
<dbReference type="SUPFAM" id="SSF88723">
    <property type="entry name" value="PIN domain-like"/>
    <property type="match status" value="1"/>
</dbReference>
<dbReference type="PROSITE" id="PS00841">
    <property type="entry name" value="XPG_1"/>
    <property type="match status" value="1"/>
</dbReference>
<dbReference type="PROSITE" id="PS00842">
    <property type="entry name" value="XPG_2"/>
    <property type="match status" value="1"/>
</dbReference>
<evidence type="ECO:0000255" key="1">
    <source>
        <dbReference type="HAMAP-Rule" id="MF_03140"/>
    </source>
</evidence>
<evidence type="ECO:0000256" key="2">
    <source>
        <dbReference type="SAM" id="MobiDB-lite"/>
    </source>
</evidence>
<protein>
    <recommendedName>
        <fullName evidence="1">Flap endonuclease 1</fullName>
        <shortName evidence="1">FEN-1</shortName>
        <ecNumber evidence="1">3.1.-.-</ecNumber>
    </recommendedName>
    <alternativeName>
        <fullName evidence="1">Flap structure-specific endonuclease 1</fullName>
    </alternativeName>
</protein>
<name>FEN1_NEOFI</name>
<reference key="1">
    <citation type="journal article" date="2008" name="PLoS Genet.">
        <title>Genomic islands in the pathogenic filamentous fungus Aspergillus fumigatus.</title>
        <authorList>
            <person name="Fedorova N.D."/>
            <person name="Khaldi N."/>
            <person name="Joardar V.S."/>
            <person name="Maiti R."/>
            <person name="Amedeo P."/>
            <person name="Anderson M.J."/>
            <person name="Crabtree J."/>
            <person name="Silva J.C."/>
            <person name="Badger J.H."/>
            <person name="Albarraq A."/>
            <person name="Angiuoli S."/>
            <person name="Bussey H."/>
            <person name="Bowyer P."/>
            <person name="Cotty P.J."/>
            <person name="Dyer P.S."/>
            <person name="Egan A."/>
            <person name="Galens K."/>
            <person name="Fraser-Liggett C.M."/>
            <person name="Haas B.J."/>
            <person name="Inman J.M."/>
            <person name="Kent R."/>
            <person name="Lemieux S."/>
            <person name="Malavazi I."/>
            <person name="Orvis J."/>
            <person name="Roemer T."/>
            <person name="Ronning C.M."/>
            <person name="Sundaram J.P."/>
            <person name="Sutton G."/>
            <person name="Turner G."/>
            <person name="Venter J.C."/>
            <person name="White O.R."/>
            <person name="Whitty B.R."/>
            <person name="Youngman P."/>
            <person name="Wolfe K.H."/>
            <person name="Goldman G.H."/>
            <person name="Wortman J.R."/>
            <person name="Jiang B."/>
            <person name="Denning D.W."/>
            <person name="Nierman W.C."/>
        </authorList>
    </citation>
    <scope>NUCLEOTIDE SEQUENCE [LARGE SCALE GENOMIC DNA]</scope>
    <source>
        <strain>ATCC 1020 / DSM 3700 / CBS 544.65 / FGSC A1164 / JCM 1740 / NRRL 181 / WB 181</strain>
    </source>
</reference>
<gene>
    <name type="primary">fen1</name>
    <name type="ORF">NFIA_071190</name>
</gene>
<sequence length="395" mass="44748">MGIKHLFQVIQENAPDAIKAGDIKNHFGRKVAIDASMSIYSFLIAVRSEGQQLMSESGETTSHLMGMFYRTLRMVDNGIKPLYVFDGAPPKLKSGELAKRTARKAEATEAHEEAKETGTAEDVEKFSRRTVRVTREHNAECKKLLKLMGIPYIDAPTEAEAQCAVLARAGKVYAAASEDMDTLCFEAPILLRHLTFSEQRKEPIQEIHLNRTLEGLGMDRKQFIDLCILLGCDYLEPIPKVGPNTALKLIREHGSLEKVVEAIENDPKKKYVIPEDWPYQDARELFLHPDVREADHPECDFKWEAPDVEALVEFLVKDKGFNEDRVRNGAARLQKNLKTAQQSRLEGFFKPVARTDEEKASLKRKHDEKLQEQKKRKKEEAKAKKEAKAKPRGAA</sequence>
<proteinExistence type="inferred from homology"/>
<feature type="chain" id="PRO_0000403587" description="Flap endonuclease 1">
    <location>
        <begin position="1"/>
        <end position="395"/>
    </location>
</feature>
<feature type="region of interest" description="N-domain">
    <location>
        <begin position="1"/>
        <end position="104"/>
    </location>
</feature>
<feature type="region of interest" description="Disordered" evidence="2">
    <location>
        <begin position="102"/>
        <end position="121"/>
    </location>
</feature>
<feature type="region of interest" description="I-domain">
    <location>
        <begin position="122"/>
        <end position="253"/>
    </location>
</feature>
<feature type="region of interest" description="Interaction with PCNA" evidence="1">
    <location>
        <begin position="341"/>
        <end position="349"/>
    </location>
</feature>
<feature type="region of interest" description="Disordered" evidence="2">
    <location>
        <begin position="348"/>
        <end position="395"/>
    </location>
</feature>
<feature type="compositionally biased region" description="Basic and acidic residues" evidence="2">
    <location>
        <begin position="353"/>
        <end position="389"/>
    </location>
</feature>
<feature type="binding site" evidence="1">
    <location>
        <position position="34"/>
    </location>
    <ligand>
        <name>Mg(2+)</name>
        <dbReference type="ChEBI" id="CHEBI:18420"/>
        <label>1</label>
    </ligand>
</feature>
<feature type="binding site" evidence="1">
    <location>
        <position position="47"/>
    </location>
    <ligand>
        <name>DNA</name>
        <dbReference type="ChEBI" id="CHEBI:16991"/>
    </ligand>
</feature>
<feature type="binding site" evidence="1">
    <location>
        <position position="70"/>
    </location>
    <ligand>
        <name>DNA</name>
        <dbReference type="ChEBI" id="CHEBI:16991"/>
    </ligand>
</feature>
<feature type="binding site" evidence="1">
    <location>
        <position position="86"/>
    </location>
    <ligand>
        <name>Mg(2+)</name>
        <dbReference type="ChEBI" id="CHEBI:18420"/>
        <label>1</label>
    </ligand>
</feature>
<feature type="binding site" evidence="1">
    <location>
        <position position="158"/>
    </location>
    <ligand>
        <name>DNA</name>
        <dbReference type="ChEBI" id="CHEBI:16991"/>
    </ligand>
</feature>
<feature type="binding site" evidence="1">
    <location>
        <position position="158"/>
    </location>
    <ligand>
        <name>Mg(2+)</name>
        <dbReference type="ChEBI" id="CHEBI:18420"/>
        <label>1</label>
    </ligand>
</feature>
<feature type="binding site" evidence="1">
    <location>
        <position position="160"/>
    </location>
    <ligand>
        <name>Mg(2+)</name>
        <dbReference type="ChEBI" id="CHEBI:18420"/>
        <label>1</label>
    </ligand>
</feature>
<feature type="binding site" evidence="1">
    <location>
        <position position="179"/>
    </location>
    <ligand>
        <name>Mg(2+)</name>
        <dbReference type="ChEBI" id="CHEBI:18420"/>
        <label>2</label>
    </ligand>
</feature>
<feature type="binding site" evidence="1">
    <location>
        <position position="181"/>
    </location>
    <ligand>
        <name>Mg(2+)</name>
        <dbReference type="ChEBI" id="CHEBI:18420"/>
        <label>2</label>
    </ligand>
</feature>
<feature type="binding site" evidence="1">
    <location>
        <position position="231"/>
    </location>
    <ligand>
        <name>DNA</name>
        <dbReference type="ChEBI" id="CHEBI:16991"/>
    </ligand>
</feature>
<feature type="binding site" evidence="1">
    <location>
        <position position="233"/>
    </location>
    <ligand>
        <name>DNA</name>
        <dbReference type="ChEBI" id="CHEBI:16991"/>
    </ligand>
</feature>
<feature type="binding site" evidence="1">
    <location>
        <position position="233"/>
    </location>
    <ligand>
        <name>Mg(2+)</name>
        <dbReference type="ChEBI" id="CHEBI:18420"/>
        <label>2</label>
    </ligand>
</feature>
<comment type="function">
    <text evidence="1">Structure-specific nuclease with 5'-flap endonuclease and 5'-3' exonuclease activities involved in DNA replication and repair. During DNA replication, cleaves the 5'-overhanging flap structure that is generated by displacement synthesis when DNA polymerase encounters the 5'-end of a downstream Okazaki fragment. It enters the flap from the 5'-end and then tracks to cleave the flap base, leaving a nick for ligation. Also involved in the long patch base excision repair (LP-BER) pathway, by cleaving within the apurinic/apyrimidinic (AP) site-terminated flap. Acts as a genome stabilization factor that prevents flaps from equilibrating into structures that lead to duplications and deletions. Also possesses 5'-3' exonuclease activity on nicked or gapped double-stranded DNA, and exhibits RNase H activity. Also involved in replication and repair of rDNA and in repairing mitochondrial DNA.</text>
</comment>
<comment type="cofactor">
    <cofactor evidence="1">
        <name>Mg(2+)</name>
        <dbReference type="ChEBI" id="CHEBI:18420"/>
    </cofactor>
    <text evidence="1">Binds 2 magnesium ions per subunit. They probably participate in the reaction catalyzed by the enzyme. May bind an additional third magnesium ion after substrate binding.</text>
</comment>
<comment type="subunit">
    <text evidence="1">Interacts with PCNA. Three molecules of fen1 bind to one PCNA trimer with each molecule binding to one PCNA monomer. PCNA stimulates the nuclease activity without altering cleavage specificity.</text>
</comment>
<comment type="subcellular location">
    <subcellularLocation>
        <location evidence="1">Nucleus</location>
        <location evidence="1">Nucleolus</location>
    </subcellularLocation>
    <subcellularLocation>
        <location evidence="1">Nucleus</location>
        <location evidence="1">Nucleoplasm</location>
    </subcellularLocation>
    <subcellularLocation>
        <location evidence="1">Mitochondrion</location>
    </subcellularLocation>
    <text evidence="1">Resides mostly in the nucleoli and relocalizes to the nucleoplasm upon DNA damage.</text>
</comment>
<comment type="PTM">
    <text evidence="1">Phosphorylated. Phosphorylation upon DNA damage induces relocalization to the nuclear plasma.</text>
</comment>
<comment type="similarity">
    <text evidence="1">Belongs to the XPG/RAD2 endonuclease family. FEN1 subfamily.</text>
</comment>